<feature type="chain" id="PRO_0000371194" description="ATP synthase subunit delta">
    <location>
        <begin position="1"/>
        <end position="177"/>
    </location>
</feature>
<comment type="function">
    <text evidence="1">F(1)F(0) ATP synthase produces ATP from ADP in the presence of a proton or sodium gradient. F-type ATPases consist of two structural domains, F(1) containing the extramembraneous catalytic core and F(0) containing the membrane proton channel, linked together by a central stalk and a peripheral stalk. During catalysis, ATP synthesis in the catalytic domain of F(1) is coupled via a rotary mechanism of the central stalk subunits to proton translocation.</text>
</comment>
<comment type="function">
    <text evidence="1">This protein is part of the stalk that links CF(0) to CF(1). It either transmits conformational changes from CF(0) to CF(1) or is implicated in proton conduction.</text>
</comment>
<comment type="subunit">
    <text evidence="1">F-type ATPases have 2 components, F(1) - the catalytic core - and F(0) - the membrane proton channel. F(1) has five subunits: alpha(3), beta(3), gamma(1), delta(1), epsilon(1). F(0) has three main subunits: a(1), b(2) and c(10-14). The alpha and beta chains form an alternating ring which encloses part of the gamma chain. F(1) is attached to F(0) by a central stalk formed by the gamma and epsilon chains, while a peripheral stalk is formed by the delta and b chains.</text>
</comment>
<comment type="subcellular location">
    <subcellularLocation>
        <location evidence="1">Cell inner membrane</location>
        <topology evidence="1">Peripheral membrane protein</topology>
    </subcellularLocation>
</comment>
<comment type="similarity">
    <text evidence="1">Belongs to the ATPase delta chain family.</text>
</comment>
<comment type="sequence caution" evidence="2">
    <conflict type="erroneous initiation">
        <sequence resource="EMBL-CDS" id="ACH64954"/>
    </conflict>
</comment>
<gene>
    <name evidence="1" type="primary">atpH</name>
    <name type="ordered locus">VFMJ11_2702</name>
</gene>
<organism>
    <name type="scientific">Aliivibrio fischeri (strain MJ11)</name>
    <name type="common">Vibrio fischeri</name>
    <dbReference type="NCBI Taxonomy" id="388396"/>
    <lineage>
        <taxon>Bacteria</taxon>
        <taxon>Pseudomonadati</taxon>
        <taxon>Pseudomonadota</taxon>
        <taxon>Gammaproteobacteria</taxon>
        <taxon>Vibrionales</taxon>
        <taxon>Vibrionaceae</taxon>
        <taxon>Aliivibrio</taxon>
    </lineage>
</organism>
<protein>
    <recommendedName>
        <fullName evidence="1">ATP synthase subunit delta</fullName>
    </recommendedName>
    <alternativeName>
        <fullName evidence="1">ATP synthase F(1) sector subunit delta</fullName>
    </alternativeName>
    <alternativeName>
        <fullName evidence="1">F-type ATPase subunit delta</fullName>
        <shortName evidence="1">F-ATPase subunit delta</shortName>
    </alternativeName>
</protein>
<dbReference type="EMBL" id="CP001139">
    <property type="protein sequence ID" value="ACH64954.1"/>
    <property type="status" value="ALT_INIT"/>
    <property type="molecule type" value="Genomic_DNA"/>
</dbReference>
<dbReference type="RefSeq" id="WP_005421590.1">
    <property type="nucleotide sequence ID" value="NC_011184.1"/>
</dbReference>
<dbReference type="SMR" id="B5FCZ4"/>
<dbReference type="KEGG" id="vfm:VFMJ11_2702"/>
<dbReference type="HOGENOM" id="CLU_085114_3_0_6"/>
<dbReference type="Proteomes" id="UP000001857">
    <property type="component" value="Chromosome I"/>
</dbReference>
<dbReference type="GO" id="GO:0005886">
    <property type="term" value="C:plasma membrane"/>
    <property type="evidence" value="ECO:0007669"/>
    <property type="project" value="UniProtKB-SubCell"/>
</dbReference>
<dbReference type="GO" id="GO:0045259">
    <property type="term" value="C:proton-transporting ATP synthase complex"/>
    <property type="evidence" value="ECO:0007669"/>
    <property type="project" value="UniProtKB-KW"/>
</dbReference>
<dbReference type="GO" id="GO:0046933">
    <property type="term" value="F:proton-transporting ATP synthase activity, rotational mechanism"/>
    <property type="evidence" value="ECO:0007669"/>
    <property type="project" value="UniProtKB-UniRule"/>
</dbReference>
<dbReference type="Gene3D" id="1.10.520.20">
    <property type="entry name" value="N-terminal domain of the delta subunit of the F1F0-ATP synthase"/>
    <property type="match status" value="1"/>
</dbReference>
<dbReference type="HAMAP" id="MF_01416">
    <property type="entry name" value="ATP_synth_delta_bact"/>
    <property type="match status" value="1"/>
</dbReference>
<dbReference type="InterPro" id="IPR026015">
    <property type="entry name" value="ATP_synth_OSCP/delta_N_sf"/>
</dbReference>
<dbReference type="InterPro" id="IPR020781">
    <property type="entry name" value="ATPase_OSCP/d_CS"/>
</dbReference>
<dbReference type="InterPro" id="IPR000711">
    <property type="entry name" value="ATPase_OSCP/dsu"/>
</dbReference>
<dbReference type="NCBIfam" id="TIGR01145">
    <property type="entry name" value="ATP_synt_delta"/>
    <property type="match status" value="1"/>
</dbReference>
<dbReference type="NCBIfam" id="NF004402">
    <property type="entry name" value="PRK05758.2-2"/>
    <property type="match status" value="1"/>
</dbReference>
<dbReference type="NCBIfam" id="NF004404">
    <property type="entry name" value="PRK05758.2-5"/>
    <property type="match status" value="1"/>
</dbReference>
<dbReference type="PANTHER" id="PTHR11910">
    <property type="entry name" value="ATP SYNTHASE DELTA CHAIN"/>
    <property type="match status" value="1"/>
</dbReference>
<dbReference type="Pfam" id="PF00213">
    <property type="entry name" value="OSCP"/>
    <property type="match status" value="1"/>
</dbReference>
<dbReference type="PRINTS" id="PR00125">
    <property type="entry name" value="ATPASEDELTA"/>
</dbReference>
<dbReference type="SUPFAM" id="SSF47928">
    <property type="entry name" value="N-terminal domain of the delta subunit of the F1F0-ATP synthase"/>
    <property type="match status" value="1"/>
</dbReference>
<dbReference type="PROSITE" id="PS00389">
    <property type="entry name" value="ATPASE_DELTA"/>
    <property type="match status" value="1"/>
</dbReference>
<name>ATPD_ALIFM</name>
<evidence type="ECO:0000255" key="1">
    <source>
        <dbReference type="HAMAP-Rule" id="MF_01416"/>
    </source>
</evidence>
<evidence type="ECO:0000305" key="2"/>
<accession>B5FCZ4</accession>
<keyword id="KW-0066">ATP synthesis</keyword>
<keyword id="KW-0997">Cell inner membrane</keyword>
<keyword id="KW-1003">Cell membrane</keyword>
<keyword id="KW-0139">CF(1)</keyword>
<keyword id="KW-0375">Hydrogen ion transport</keyword>
<keyword id="KW-0406">Ion transport</keyword>
<keyword id="KW-0472">Membrane</keyword>
<keyword id="KW-0813">Transport</keyword>
<sequence length="177" mass="19419">MSEMATIARPYAKAAFDFAVEKGELSQWAQMLTFCSEVAKNKDVAQLLDGAVASEQLAEIFISICGEQLNEFGQNLIHVMAENGRLKVLPGVLEQFILLQHEFEKVIDADVTSAIELTEQQKADIGAKLEARLERKVKLNCSVDETLLAGVIIRAGDLVIDNSARGRLGRLSETLQS</sequence>
<proteinExistence type="inferred from homology"/>
<reference key="1">
    <citation type="submission" date="2008-08" db="EMBL/GenBank/DDBJ databases">
        <title>Complete sequence of Vibrio fischeri strain MJ11.</title>
        <authorList>
            <person name="Mandel M.J."/>
            <person name="Stabb E.V."/>
            <person name="Ruby E.G."/>
            <person name="Ferriera S."/>
            <person name="Johnson J."/>
            <person name="Kravitz S."/>
            <person name="Beeson K."/>
            <person name="Sutton G."/>
            <person name="Rogers Y.-H."/>
            <person name="Friedman R."/>
            <person name="Frazier M."/>
            <person name="Venter J.C."/>
        </authorList>
    </citation>
    <scope>NUCLEOTIDE SEQUENCE [LARGE SCALE GENOMIC DNA]</scope>
    <source>
        <strain>MJ11</strain>
    </source>
</reference>